<organism>
    <name type="scientific">Listeria monocytogenes serovar 1/2a (strain ATCC BAA-679 / EGD-e)</name>
    <dbReference type="NCBI Taxonomy" id="169963"/>
    <lineage>
        <taxon>Bacteria</taxon>
        <taxon>Bacillati</taxon>
        <taxon>Bacillota</taxon>
        <taxon>Bacilli</taxon>
        <taxon>Bacillales</taxon>
        <taxon>Listeriaceae</taxon>
        <taxon>Listeria</taxon>
    </lineage>
</organism>
<comment type="function">
    <text evidence="1">Involved in the biosynthesis of isoprenoids. Catalyzes the 1,3-allylic rearrangement of the homoallylic substrate isopentenyl (IPP) to its allylic isomer, dimethylallyl diphosphate (DMAPP).</text>
</comment>
<comment type="catalytic activity">
    <reaction evidence="1">
        <text>isopentenyl diphosphate = dimethylallyl diphosphate</text>
        <dbReference type="Rhea" id="RHEA:23284"/>
        <dbReference type="ChEBI" id="CHEBI:57623"/>
        <dbReference type="ChEBI" id="CHEBI:128769"/>
        <dbReference type="EC" id="5.3.3.2"/>
    </reaction>
</comment>
<comment type="cofactor">
    <cofactor evidence="1">
        <name>FMN</name>
        <dbReference type="ChEBI" id="CHEBI:58210"/>
    </cofactor>
</comment>
<comment type="cofactor">
    <cofactor evidence="1">
        <name>NADPH</name>
        <dbReference type="ChEBI" id="CHEBI:57783"/>
    </cofactor>
</comment>
<comment type="cofactor">
    <cofactor evidence="1">
        <name>Mg(2+)</name>
        <dbReference type="ChEBI" id="CHEBI:18420"/>
    </cofactor>
</comment>
<comment type="subunit">
    <text evidence="1">Homooctamer. Dimer of tetramers.</text>
</comment>
<comment type="subcellular location">
    <subcellularLocation>
        <location evidence="1">Cytoplasm</location>
    </subcellularLocation>
</comment>
<comment type="similarity">
    <text evidence="1">Belongs to the IPP isomerase type 2 family.</text>
</comment>
<proteinExistence type="inferred from homology"/>
<gene>
    <name evidence="1" type="primary">fni</name>
    <name type="ordered locus">lmo1383</name>
</gene>
<name>IDI2_LISMO</name>
<reference key="1">
    <citation type="journal article" date="2001" name="Science">
        <title>Comparative genomics of Listeria species.</title>
        <authorList>
            <person name="Glaser P."/>
            <person name="Frangeul L."/>
            <person name="Buchrieser C."/>
            <person name="Rusniok C."/>
            <person name="Amend A."/>
            <person name="Baquero F."/>
            <person name="Berche P."/>
            <person name="Bloecker H."/>
            <person name="Brandt P."/>
            <person name="Chakraborty T."/>
            <person name="Charbit A."/>
            <person name="Chetouani F."/>
            <person name="Couve E."/>
            <person name="de Daruvar A."/>
            <person name="Dehoux P."/>
            <person name="Domann E."/>
            <person name="Dominguez-Bernal G."/>
            <person name="Duchaud E."/>
            <person name="Durant L."/>
            <person name="Dussurget O."/>
            <person name="Entian K.-D."/>
            <person name="Fsihi H."/>
            <person name="Garcia-del Portillo F."/>
            <person name="Garrido P."/>
            <person name="Gautier L."/>
            <person name="Goebel W."/>
            <person name="Gomez-Lopez N."/>
            <person name="Hain T."/>
            <person name="Hauf J."/>
            <person name="Jackson D."/>
            <person name="Jones L.-M."/>
            <person name="Kaerst U."/>
            <person name="Kreft J."/>
            <person name="Kuhn M."/>
            <person name="Kunst F."/>
            <person name="Kurapkat G."/>
            <person name="Madueno E."/>
            <person name="Maitournam A."/>
            <person name="Mata Vicente J."/>
            <person name="Ng E."/>
            <person name="Nedjari H."/>
            <person name="Nordsiek G."/>
            <person name="Novella S."/>
            <person name="de Pablos B."/>
            <person name="Perez-Diaz J.-C."/>
            <person name="Purcell R."/>
            <person name="Remmel B."/>
            <person name="Rose M."/>
            <person name="Schlueter T."/>
            <person name="Simoes N."/>
            <person name="Tierrez A."/>
            <person name="Vazquez-Boland J.-A."/>
            <person name="Voss H."/>
            <person name="Wehland J."/>
            <person name="Cossart P."/>
        </authorList>
    </citation>
    <scope>NUCLEOTIDE SEQUENCE [LARGE SCALE GENOMIC DNA]</scope>
    <source>
        <strain>ATCC BAA-679 / EGD-e</strain>
    </source>
</reference>
<dbReference type="EC" id="5.3.3.2" evidence="1"/>
<dbReference type="EMBL" id="AL591978">
    <property type="protein sequence ID" value="CAC99461.1"/>
    <property type="molecule type" value="Genomic_DNA"/>
</dbReference>
<dbReference type="PIR" id="AG1247">
    <property type="entry name" value="AG1247"/>
</dbReference>
<dbReference type="RefSeq" id="NP_464908.1">
    <property type="nucleotide sequence ID" value="NC_003210.1"/>
</dbReference>
<dbReference type="RefSeq" id="WP_010990109.1">
    <property type="nucleotide sequence ID" value="NZ_CP149495.1"/>
</dbReference>
<dbReference type="SMR" id="Q8Y7A5"/>
<dbReference type="STRING" id="169963.gene:17594040"/>
<dbReference type="PaxDb" id="169963-lmo1383"/>
<dbReference type="EnsemblBacteria" id="CAC99461">
    <property type="protein sequence ID" value="CAC99461"/>
    <property type="gene ID" value="CAC99461"/>
</dbReference>
<dbReference type="GeneID" id="987838"/>
<dbReference type="KEGG" id="lmo:lmo1383"/>
<dbReference type="PATRIC" id="fig|169963.11.peg.1421"/>
<dbReference type="eggNOG" id="COG1304">
    <property type="taxonomic scope" value="Bacteria"/>
</dbReference>
<dbReference type="HOGENOM" id="CLU_065515_0_0_9"/>
<dbReference type="OrthoDB" id="9795032at2"/>
<dbReference type="PhylomeDB" id="Q8Y7A5"/>
<dbReference type="BioCyc" id="LMON169963:LMO1383-MONOMER"/>
<dbReference type="Proteomes" id="UP000000817">
    <property type="component" value="Chromosome"/>
</dbReference>
<dbReference type="GO" id="GO:0005737">
    <property type="term" value="C:cytoplasm"/>
    <property type="evidence" value="ECO:0007669"/>
    <property type="project" value="UniProtKB-SubCell"/>
</dbReference>
<dbReference type="GO" id="GO:0010181">
    <property type="term" value="F:FMN binding"/>
    <property type="evidence" value="ECO:0007669"/>
    <property type="project" value="UniProtKB-UniRule"/>
</dbReference>
<dbReference type="GO" id="GO:0004452">
    <property type="term" value="F:isopentenyl-diphosphate delta-isomerase activity"/>
    <property type="evidence" value="ECO:0007669"/>
    <property type="project" value="UniProtKB-UniRule"/>
</dbReference>
<dbReference type="GO" id="GO:0000287">
    <property type="term" value="F:magnesium ion binding"/>
    <property type="evidence" value="ECO:0007669"/>
    <property type="project" value="UniProtKB-UniRule"/>
</dbReference>
<dbReference type="GO" id="GO:0070402">
    <property type="term" value="F:NADPH binding"/>
    <property type="evidence" value="ECO:0007669"/>
    <property type="project" value="UniProtKB-UniRule"/>
</dbReference>
<dbReference type="GO" id="GO:0016491">
    <property type="term" value="F:oxidoreductase activity"/>
    <property type="evidence" value="ECO:0007669"/>
    <property type="project" value="InterPro"/>
</dbReference>
<dbReference type="GO" id="GO:0008299">
    <property type="term" value="P:isoprenoid biosynthetic process"/>
    <property type="evidence" value="ECO:0007669"/>
    <property type="project" value="UniProtKB-UniRule"/>
</dbReference>
<dbReference type="CDD" id="cd02811">
    <property type="entry name" value="IDI-2_FMN"/>
    <property type="match status" value="1"/>
</dbReference>
<dbReference type="Gene3D" id="3.20.20.70">
    <property type="entry name" value="Aldolase class I"/>
    <property type="match status" value="1"/>
</dbReference>
<dbReference type="HAMAP" id="MF_00354">
    <property type="entry name" value="Idi_2"/>
    <property type="match status" value="1"/>
</dbReference>
<dbReference type="InterPro" id="IPR013785">
    <property type="entry name" value="Aldolase_TIM"/>
</dbReference>
<dbReference type="InterPro" id="IPR000262">
    <property type="entry name" value="FMN-dep_DH"/>
</dbReference>
<dbReference type="InterPro" id="IPR011179">
    <property type="entry name" value="IPdP_isomerase"/>
</dbReference>
<dbReference type="NCBIfam" id="TIGR02151">
    <property type="entry name" value="IPP_isom_2"/>
    <property type="match status" value="1"/>
</dbReference>
<dbReference type="PANTHER" id="PTHR43665">
    <property type="entry name" value="ISOPENTENYL-DIPHOSPHATE DELTA-ISOMERASE"/>
    <property type="match status" value="1"/>
</dbReference>
<dbReference type="PANTHER" id="PTHR43665:SF1">
    <property type="entry name" value="ISOPENTENYL-DIPHOSPHATE DELTA-ISOMERASE"/>
    <property type="match status" value="1"/>
</dbReference>
<dbReference type="Pfam" id="PF01070">
    <property type="entry name" value="FMN_dh"/>
    <property type="match status" value="1"/>
</dbReference>
<dbReference type="PIRSF" id="PIRSF003314">
    <property type="entry name" value="IPP_isomerase"/>
    <property type="match status" value="1"/>
</dbReference>
<dbReference type="SUPFAM" id="SSF51395">
    <property type="entry name" value="FMN-linked oxidoreductases"/>
    <property type="match status" value="1"/>
</dbReference>
<accession>Q8Y7A5</accession>
<evidence type="ECO:0000255" key="1">
    <source>
        <dbReference type="HAMAP-Rule" id="MF_00354"/>
    </source>
</evidence>
<keyword id="KW-0963">Cytoplasm</keyword>
<keyword id="KW-0285">Flavoprotein</keyword>
<keyword id="KW-0288">FMN</keyword>
<keyword id="KW-0413">Isomerase</keyword>
<keyword id="KW-0414">Isoprene biosynthesis</keyword>
<keyword id="KW-0460">Magnesium</keyword>
<keyword id="KW-0479">Metal-binding</keyword>
<keyword id="KW-0521">NADP</keyword>
<keyword id="KW-1185">Reference proteome</keyword>
<sequence length="358" mass="39490">MQKNDDLLRERRKDEHVALGVKQNEQLAPSSLKDIQLIGTSIPRYNVKDIDLTTTIFGKNVPFPFYINAMTGGSRHTKKINAELAEIAREVAIPMAVGSQSAALKNSSLIDTYNIVREINPNGMILANVSPEVAIQDGLQAIEMLEANALQIHINPAQELVMQEGDRSFSHWLTRIEEYVKLSPVPIVVKEVGFGMTRETVKTLADIGVQTVDLAGKGGTNFAQIENDRRRDQAYDFLLDWGISTGQALIDMQHQDAPKIAYLASGGIRNPLDIIKALALGADSVGMAGQIIYSLKKEGVTKTIEKLELWKEQLRGLFVLANAKNIAELKTTPLIVSGELAKWGTLREINLVKLANRK</sequence>
<protein>
    <recommendedName>
        <fullName evidence="1">Isopentenyl-diphosphate delta-isomerase</fullName>
        <shortName evidence="1">IPP isomerase</shortName>
        <ecNumber evidence="1">5.3.3.2</ecNumber>
    </recommendedName>
    <alternativeName>
        <fullName evidence="1">Isopentenyl diphosphate:dimethylallyl diphosphate isomerase</fullName>
    </alternativeName>
    <alternativeName>
        <fullName evidence="1">Isopentenyl pyrophosphate isomerase</fullName>
    </alternativeName>
    <alternativeName>
        <fullName evidence="1">Type 2 isopentenyl diphosphate isomerase</fullName>
        <shortName evidence="1">IDI-2</shortName>
    </alternativeName>
</protein>
<feature type="chain" id="PRO_0000134414" description="Isopentenyl-diphosphate delta-isomerase">
    <location>
        <begin position="1"/>
        <end position="358"/>
    </location>
</feature>
<feature type="binding site" evidence="1">
    <location>
        <begin position="12"/>
        <end position="13"/>
    </location>
    <ligand>
        <name>substrate</name>
    </ligand>
</feature>
<feature type="binding site" evidence="1">
    <location>
        <begin position="69"/>
        <end position="71"/>
    </location>
    <ligand>
        <name>FMN</name>
        <dbReference type="ChEBI" id="CHEBI:58210"/>
    </ligand>
</feature>
<feature type="binding site" evidence="1">
    <location>
        <position position="99"/>
    </location>
    <ligand>
        <name>FMN</name>
        <dbReference type="ChEBI" id="CHEBI:58210"/>
    </ligand>
</feature>
<feature type="binding site" evidence="1">
    <location>
        <position position="128"/>
    </location>
    <ligand>
        <name>FMN</name>
        <dbReference type="ChEBI" id="CHEBI:58210"/>
    </ligand>
</feature>
<feature type="binding site" evidence="1">
    <location>
        <position position="158"/>
    </location>
    <ligand>
        <name>substrate</name>
    </ligand>
</feature>
<feature type="binding site" evidence="1">
    <location>
        <position position="159"/>
    </location>
    <ligand>
        <name>Mg(2+)</name>
        <dbReference type="ChEBI" id="CHEBI:18420"/>
    </ligand>
</feature>
<feature type="binding site" evidence="1">
    <location>
        <position position="190"/>
    </location>
    <ligand>
        <name>FMN</name>
        <dbReference type="ChEBI" id="CHEBI:58210"/>
    </ligand>
</feature>
<feature type="binding site" evidence="1">
    <location>
        <position position="220"/>
    </location>
    <ligand>
        <name>FMN</name>
        <dbReference type="ChEBI" id="CHEBI:58210"/>
    </ligand>
</feature>
<feature type="binding site" evidence="1">
    <location>
        <begin position="267"/>
        <end position="269"/>
    </location>
    <ligand>
        <name>FMN</name>
        <dbReference type="ChEBI" id="CHEBI:58210"/>
    </ligand>
</feature>
<feature type="binding site" evidence="1">
    <location>
        <begin position="288"/>
        <end position="289"/>
    </location>
    <ligand>
        <name>FMN</name>
        <dbReference type="ChEBI" id="CHEBI:58210"/>
    </ligand>
</feature>